<protein>
    <recommendedName>
        <fullName evidence="1">Large ribosomal subunit protein uL24</fullName>
    </recommendedName>
    <alternativeName>
        <fullName evidence="2">50S ribosomal protein L24</fullName>
    </alternativeName>
</protein>
<gene>
    <name evidence="1" type="primary">rplX</name>
    <name type="ordered locus">SPD_0204</name>
</gene>
<accession>Q04MM5</accession>
<proteinExistence type="inferred from homology"/>
<reference key="1">
    <citation type="journal article" date="2007" name="J. Bacteriol.">
        <title>Genome sequence of Avery's virulent serotype 2 strain D39 of Streptococcus pneumoniae and comparison with that of unencapsulated laboratory strain R6.</title>
        <authorList>
            <person name="Lanie J.A."/>
            <person name="Ng W.-L."/>
            <person name="Kazmierczak K.M."/>
            <person name="Andrzejewski T.M."/>
            <person name="Davidsen T.M."/>
            <person name="Wayne K.J."/>
            <person name="Tettelin H."/>
            <person name="Glass J.I."/>
            <person name="Winkler M.E."/>
        </authorList>
    </citation>
    <scope>NUCLEOTIDE SEQUENCE [LARGE SCALE GENOMIC DNA]</scope>
    <source>
        <strain>D39 / NCTC 7466</strain>
    </source>
</reference>
<keyword id="KW-1185">Reference proteome</keyword>
<keyword id="KW-0687">Ribonucleoprotein</keyword>
<keyword id="KW-0689">Ribosomal protein</keyword>
<keyword id="KW-0694">RNA-binding</keyword>
<keyword id="KW-0699">rRNA-binding</keyword>
<dbReference type="EMBL" id="CP000410">
    <property type="protein sequence ID" value="ABJ54346.1"/>
    <property type="molecule type" value="Genomic_DNA"/>
</dbReference>
<dbReference type="RefSeq" id="WP_000497691.1">
    <property type="nucleotide sequence ID" value="NZ_JAMLJR010000002.1"/>
</dbReference>
<dbReference type="SMR" id="Q04MM5"/>
<dbReference type="PaxDb" id="373153-SPD_0204"/>
<dbReference type="GeneID" id="93738968"/>
<dbReference type="KEGG" id="spd:SPD_0204"/>
<dbReference type="eggNOG" id="COG0198">
    <property type="taxonomic scope" value="Bacteria"/>
</dbReference>
<dbReference type="HOGENOM" id="CLU_093315_2_0_9"/>
<dbReference type="BioCyc" id="SPNE373153:G1G6V-227-MONOMER"/>
<dbReference type="Proteomes" id="UP000001452">
    <property type="component" value="Chromosome"/>
</dbReference>
<dbReference type="GO" id="GO:1990904">
    <property type="term" value="C:ribonucleoprotein complex"/>
    <property type="evidence" value="ECO:0007669"/>
    <property type="project" value="UniProtKB-KW"/>
</dbReference>
<dbReference type="GO" id="GO:0005840">
    <property type="term" value="C:ribosome"/>
    <property type="evidence" value="ECO:0007669"/>
    <property type="project" value="UniProtKB-KW"/>
</dbReference>
<dbReference type="GO" id="GO:0019843">
    <property type="term" value="F:rRNA binding"/>
    <property type="evidence" value="ECO:0007669"/>
    <property type="project" value="UniProtKB-UniRule"/>
</dbReference>
<dbReference type="GO" id="GO:0003735">
    <property type="term" value="F:structural constituent of ribosome"/>
    <property type="evidence" value="ECO:0007669"/>
    <property type="project" value="InterPro"/>
</dbReference>
<dbReference type="GO" id="GO:0006412">
    <property type="term" value="P:translation"/>
    <property type="evidence" value="ECO:0007669"/>
    <property type="project" value="UniProtKB-UniRule"/>
</dbReference>
<dbReference type="CDD" id="cd06089">
    <property type="entry name" value="KOW_RPL26"/>
    <property type="match status" value="1"/>
</dbReference>
<dbReference type="FunFam" id="2.30.30.30:FF:000004">
    <property type="entry name" value="50S ribosomal protein L24"/>
    <property type="match status" value="1"/>
</dbReference>
<dbReference type="Gene3D" id="2.30.30.30">
    <property type="match status" value="1"/>
</dbReference>
<dbReference type="HAMAP" id="MF_01326_B">
    <property type="entry name" value="Ribosomal_uL24_B"/>
    <property type="match status" value="1"/>
</dbReference>
<dbReference type="InterPro" id="IPR005824">
    <property type="entry name" value="KOW"/>
</dbReference>
<dbReference type="InterPro" id="IPR014722">
    <property type="entry name" value="Rib_uL2_dom2"/>
</dbReference>
<dbReference type="InterPro" id="IPR003256">
    <property type="entry name" value="Ribosomal_uL24"/>
</dbReference>
<dbReference type="InterPro" id="IPR005825">
    <property type="entry name" value="Ribosomal_uL24_CS"/>
</dbReference>
<dbReference type="InterPro" id="IPR041988">
    <property type="entry name" value="Ribosomal_uL24_KOW"/>
</dbReference>
<dbReference type="InterPro" id="IPR008991">
    <property type="entry name" value="Translation_prot_SH3-like_sf"/>
</dbReference>
<dbReference type="NCBIfam" id="TIGR01079">
    <property type="entry name" value="rplX_bact"/>
    <property type="match status" value="1"/>
</dbReference>
<dbReference type="PANTHER" id="PTHR12903">
    <property type="entry name" value="MITOCHONDRIAL RIBOSOMAL PROTEIN L24"/>
    <property type="match status" value="1"/>
</dbReference>
<dbReference type="Pfam" id="PF00467">
    <property type="entry name" value="KOW"/>
    <property type="match status" value="1"/>
</dbReference>
<dbReference type="Pfam" id="PF17136">
    <property type="entry name" value="ribosomal_L24"/>
    <property type="match status" value="1"/>
</dbReference>
<dbReference type="SMART" id="SM00739">
    <property type="entry name" value="KOW"/>
    <property type="match status" value="1"/>
</dbReference>
<dbReference type="SUPFAM" id="SSF50104">
    <property type="entry name" value="Translation proteins SH3-like domain"/>
    <property type="match status" value="1"/>
</dbReference>
<dbReference type="PROSITE" id="PS01108">
    <property type="entry name" value="RIBOSOMAL_L24"/>
    <property type="match status" value="1"/>
</dbReference>
<name>RL24_STRP2</name>
<sequence>MFVKKGDKVRVIAGKDKGTEAVVLTALPKVNKVIVEGVNIVKKHQRPTNELPQGGIIEKEAAIHVSNVQVLDKNGVAGRVGYKFVDGKKVRYNKKSGEVLD</sequence>
<organism>
    <name type="scientific">Streptococcus pneumoniae serotype 2 (strain D39 / NCTC 7466)</name>
    <dbReference type="NCBI Taxonomy" id="373153"/>
    <lineage>
        <taxon>Bacteria</taxon>
        <taxon>Bacillati</taxon>
        <taxon>Bacillota</taxon>
        <taxon>Bacilli</taxon>
        <taxon>Lactobacillales</taxon>
        <taxon>Streptococcaceae</taxon>
        <taxon>Streptococcus</taxon>
    </lineage>
</organism>
<evidence type="ECO:0000255" key="1">
    <source>
        <dbReference type="HAMAP-Rule" id="MF_01326"/>
    </source>
</evidence>
<evidence type="ECO:0000305" key="2"/>
<feature type="chain" id="PRO_1000052319" description="Large ribosomal subunit protein uL24">
    <location>
        <begin position="1"/>
        <end position="101"/>
    </location>
</feature>
<comment type="function">
    <text evidence="1">One of two assembly initiator proteins, it binds directly to the 5'-end of the 23S rRNA, where it nucleates assembly of the 50S subunit.</text>
</comment>
<comment type="function">
    <text evidence="1">One of the proteins that surrounds the polypeptide exit tunnel on the outside of the subunit.</text>
</comment>
<comment type="subunit">
    <text evidence="1">Part of the 50S ribosomal subunit.</text>
</comment>
<comment type="similarity">
    <text evidence="1">Belongs to the universal ribosomal protein uL24 family.</text>
</comment>